<dbReference type="EMBL" id="CP000551">
    <property type="protein sequence ID" value="ABM71031.1"/>
    <property type="molecule type" value="Genomic_DNA"/>
</dbReference>
<dbReference type="RefSeq" id="WP_011819155.1">
    <property type="nucleotide sequence ID" value="NC_008816.1"/>
</dbReference>
<dbReference type="SMR" id="A2BTC0"/>
<dbReference type="STRING" id="146891.A9601_17481"/>
<dbReference type="KEGG" id="pmb:A9601_17481"/>
<dbReference type="eggNOG" id="COG0200">
    <property type="taxonomic scope" value="Bacteria"/>
</dbReference>
<dbReference type="HOGENOM" id="CLU_055188_4_1_3"/>
<dbReference type="OrthoDB" id="9810293at2"/>
<dbReference type="Proteomes" id="UP000002590">
    <property type="component" value="Chromosome"/>
</dbReference>
<dbReference type="GO" id="GO:0022625">
    <property type="term" value="C:cytosolic large ribosomal subunit"/>
    <property type="evidence" value="ECO:0007669"/>
    <property type="project" value="TreeGrafter"/>
</dbReference>
<dbReference type="GO" id="GO:0019843">
    <property type="term" value="F:rRNA binding"/>
    <property type="evidence" value="ECO:0007669"/>
    <property type="project" value="UniProtKB-UniRule"/>
</dbReference>
<dbReference type="GO" id="GO:0003735">
    <property type="term" value="F:structural constituent of ribosome"/>
    <property type="evidence" value="ECO:0007669"/>
    <property type="project" value="InterPro"/>
</dbReference>
<dbReference type="GO" id="GO:0006412">
    <property type="term" value="P:translation"/>
    <property type="evidence" value="ECO:0007669"/>
    <property type="project" value="UniProtKB-UniRule"/>
</dbReference>
<dbReference type="Gene3D" id="3.100.10.10">
    <property type="match status" value="1"/>
</dbReference>
<dbReference type="HAMAP" id="MF_01341">
    <property type="entry name" value="Ribosomal_uL15"/>
    <property type="match status" value="1"/>
</dbReference>
<dbReference type="InterPro" id="IPR030878">
    <property type="entry name" value="Ribosomal_uL15"/>
</dbReference>
<dbReference type="InterPro" id="IPR021131">
    <property type="entry name" value="Ribosomal_uL15/eL18"/>
</dbReference>
<dbReference type="InterPro" id="IPR036227">
    <property type="entry name" value="Ribosomal_uL15/eL18_sf"/>
</dbReference>
<dbReference type="InterPro" id="IPR005749">
    <property type="entry name" value="Ribosomal_uL15_bac-type"/>
</dbReference>
<dbReference type="InterPro" id="IPR001196">
    <property type="entry name" value="Ribosomal_uL15_CS"/>
</dbReference>
<dbReference type="NCBIfam" id="TIGR01071">
    <property type="entry name" value="rplO_bact"/>
    <property type="match status" value="1"/>
</dbReference>
<dbReference type="PANTHER" id="PTHR12934">
    <property type="entry name" value="50S RIBOSOMAL PROTEIN L15"/>
    <property type="match status" value="1"/>
</dbReference>
<dbReference type="PANTHER" id="PTHR12934:SF11">
    <property type="entry name" value="LARGE RIBOSOMAL SUBUNIT PROTEIN UL15M"/>
    <property type="match status" value="1"/>
</dbReference>
<dbReference type="Pfam" id="PF00828">
    <property type="entry name" value="Ribosomal_L27A"/>
    <property type="match status" value="1"/>
</dbReference>
<dbReference type="SUPFAM" id="SSF52080">
    <property type="entry name" value="Ribosomal proteins L15p and L18e"/>
    <property type="match status" value="1"/>
</dbReference>
<dbReference type="PROSITE" id="PS00475">
    <property type="entry name" value="RIBOSOMAL_L15"/>
    <property type="match status" value="1"/>
</dbReference>
<sequence>MTSTLNTLKSNSGSRKKKLRKGRGIAAGQGASCGFGMRGQKSRSGRPTRPGFEGGQMPLYRRVPKLKHFEIINQKNFSIINLEKLNDFKDNDTVNIDSLVKKGLIFKPKFPLKILGNGKINVKLKVQAHSFTKVAKQKIEDAGGSCELINNK</sequence>
<gene>
    <name evidence="1" type="primary">rplO</name>
    <name type="ordered locus">A9601_17481</name>
</gene>
<comment type="function">
    <text evidence="1">Binds to the 23S rRNA.</text>
</comment>
<comment type="subunit">
    <text evidence="1">Part of the 50S ribosomal subunit.</text>
</comment>
<comment type="similarity">
    <text evidence="1">Belongs to the universal ribosomal protein uL15 family.</text>
</comment>
<evidence type="ECO:0000255" key="1">
    <source>
        <dbReference type="HAMAP-Rule" id="MF_01341"/>
    </source>
</evidence>
<evidence type="ECO:0000256" key="2">
    <source>
        <dbReference type="SAM" id="MobiDB-lite"/>
    </source>
</evidence>
<evidence type="ECO:0000305" key="3"/>
<name>RL15_PROMS</name>
<organism>
    <name type="scientific">Prochlorococcus marinus (strain AS9601)</name>
    <dbReference type="NCBI Taxonomy" id="146891"/>
    <lineage>
        <taxon>Bacteria</taxon>
        <taxon>Bacillati</taxon>
        <taxon>Cyanobacteriota</taxon>
        <taxon>Cyanophyceae</taxon>
        <taxon>Synechococcales</taxon>
        <taxon>Prochlorococcaceae</taxon>
        <taxon>Prochlorococcus</taxon>
    </lineage>
</organism>
<keyword id="KW-0687">Ribonucleoprotein</keyword>
<keyword id="KW-0689">Ribosomal protein</keyword>
<keyword id="KW-0694">RNA-binding</keyword>
<keyword id="KW-0699">rRNA-binding</keyword>
<proteinExistence type="inferred from homology"/>
<protein>
    <recommendedName>
        <fullName evidence="1">Large ribosomal subunit protein uL15</fullName>
    </recommendedName>
    <alternativeName>
        <fullName evidence="3">50S ribosomal protein L15</fullName>
    </alternativeName>
</protein>
<feature type="chain" id="PRO_1000054515" description="Large ribosomal subunit protein uL15">
    <location>
        <begin position="1"/>
        <end position="152"/>
    </location>
</feature>
<feature type="region of interest" description="Disordered" evidence="2">
    <location>
        <begin position="1"/>
        <end position="57"/>
    </location>
</feature>
<feature type="compositionally biased region" description="Basic residues" evidence="2">
    <location>
        <begin position="14"/>
        <end position="23"/>
    </location>
</feature>
<feature type="compositionally biased region" description="Gly residues" evidence="2">
    <location>
        <begin position="25"/>
        <end position="37"/>
    </location>
</feature>
<reference key="1">
    <citation type="journal article" date="2007" name="PLoS Genet.">
        <title>Patterns and implications of gene gain and loss in the evolution of Prochlorococcus.</title>
        <authorList>
            <person name="Kettler G.C."/>
            <person name="Martiny A.C."/>
            <person name="Huang K."/>
            <person name="Zucker J."/>
            <person name="Coleman M.L."/>
            <person name="Rodrigue S."/>
            <person name="Chen F."/>
            <person name="Lapidus A."/>
            <person name="Ferriera S."/>
            <person name="Johnson J."/>
            <person name="Steglich C."/>
            <person name="Church G.M."/>
            <person name="Richardson P."/>
            <person name="Chisholm S.W."/>
        </authorList>
    </citation>
    <scope>NUCLEOTIDE SEQUENCE [LARGE SCALE GENOMIC DNA]</scope>
    <source>
        <strain>AS9601</strain>
    </source>
</reference>
<accession>A2BTC0</accession>